<comment type="function">
    <text evidence="6">Involved in the biosynthesis of phenolic monoterpenes natural products (PubMed:23246843). Monoterpene synthase which catalyzes the conversion of geranyl diphosphate (GPP) to sabinene hydrate, specifically (E)-sabinene hydrate, and the formation of minor amounts and traces of several other monoterpenes (e.g. mainly alpha-pinene, limonene and alpha-terpineol) (PubMed:23246843).</text>
</comment>
<comment type="catalytic activity">
    <reaction evidence="6">
        <text>(2E)-geranyl diphosphate + H2O = sabinene hydrate + diphosphate</text>
        <dbReference type="Rhea" id="RHEA:19565"/>
        <dbReference type="ChEBI" id="CHEBI:15377"/>
        <dbReference type="ChEBI" id="CHEBI:16377"/>
        <dbReference type="ChEBI" id="CHEBI:33019"/>
        <dbReference type="ChEBI" id="CHEBI:58057"/>
        <dbReference type="EC" id="4.2.3.11"/>
    </reaction>
    <physiologicalReaction direction="left-to-right" evidence="6">
        <dbReference type="Rhea" id="RHEA:19566"/>
    </physiologicalReaction>
</comment>
<comment type="cofactor">
    <cofactor evidence="3">
        <name>Mn(2+)</name>
        <dbReference type="ChEBI" id="CHEBI:29035"/>
    </cofactor>
    <cofactor evidence="3">
        <name>Mg(2+)</name>
        <dbReference type="ChEBI" id="CHEBI:18420"/>
    </cofactor>
    <text evidence="3">Binds 3 Mg(2+) or Mn(2+) ions per subunit.</text>
</comment>
<comment type="biophysicochemical properties">
    <kinetics>
        <KM evidence="6">6.1 uM for geranyl diphosphate</KM>
    </kinetics>
</comment>
<comment type="pathway">
    <text evidence="6">Secondary metabolite biosynthesis; terpenoid biosynthesis.</text>
</comment>
<comment type="subunit">
    <text evidence="1">Homodimer.</text>
</comment>
<comment type="subcellular location">
    <subcellularLocation>
        <location evidence="5">Plastid</location>
        <location evidence="5">Chloroplast</location>
    </subcellularLocation>
</comment>
<comment type="domain">
    <text evidence="4">The Asp-Asp-Xaa-Xaa-Asp/Glu (DDXXD/E) motif is important for the catalytic activity, presumably through binding to Mg(2+).</text>
</comment>
<comment type="similarity">
    <text evidence="8">Belongs to the terpene synthase family.</text>
</comment>
<feature type="transit peptide" description="Chloroplast" evidence="5">
    <location>
        <begin position="1"/>
        <end position="47"/>
    </location>
</feature>
<feature type="chain" id="PRO_0000453313" description="(E)-sabinene hydrate synthase, chloroplastic">
    <location>
        <begin position="48"/>
        <end position="597"/>
    </location>
</feature>
<feature type="region of interest" description="Homodimerization" evidence="1">
    <location>
        <begin position="359"/>
        <end position="365"/>
    </location>
</feature>
<feature type="region of interest" description="Homodimerization" evidence="1">
    <location>
        <begin position="431"/>
        <end position="468"/>
    </location>
</feature>
<feature type="short sequence motif" description="DDXXD motif" evidence="4">
    <location>
        <begin position="353"/>
        <end position="357"/>
    </location>
</feature>
<feature type="binding site" evidence="2">
    <location>
        <position position="353"/>
    </location>
    <ligand>
        <name>Mn(2+)</name>
        <dbReference type="ChEBI" id="CHEBI:29035"/>
        <label>1</label>
    </ligand>
</feature>
<feature type="binding site" evidence="2">
    <location>
        <position position="353"/>
    </location>
    <ligand>
        <name>Mn(2+)</name>
        <dbReference type="ChEBI" id="CHEBI:29035"/>
        <label>2</label>
    </ligand>
</feature>
<feature type="binding site" evidence="2">
    <location>
        <position position="357"/>
    </location>
    <ligand>
        <name>Mn(2+)</name>
        <dbReference type="ChEBI" id="CHEBI:29035"/>
        <label>1</label>
    </ligand>
</feature>
<feature type="binding site" evidence="2">
    <location>
        <position position="357"/>
    </location>
    <ligand>
        <name>Mn(2+)</name>
        <dbReference type="ChEBI" id="CHEBI:29035"/>
        <label>2</label>
    </ligand>
</feature>
<feature type="binding site" evidence="2">
    <location>
        <position position="495"/>
    </location>
    <ligand>
        <name>Mn(2+)</name>
        <dbReference type="ChEBI" id="CHEBI:29035"/>
        <label>3</label>
    </ligand>
</feature>
<feature type="binding site" evidence="2">
    <location>
        <position position="503"/>
    </location>
    <ligand>
        <name>Mn(2+)</name>
        <dbReference type="ChEBI" id="CHEBI:29035"/>
        <label>3</label>
    </ligand>
</feature>
<feature type="site" description="Confers reaction mechanism stereospecificity" evidence="6">
    <location>
        <position position="346"/>
    </location>
</feature>
<feature type="mutagenesis site" description="Reduced ability to produce (E)-sabinene hydrate but acquired ability to produce (Z)-sabinene from geranyl diphosphate (GPP)." evidence="6">
    <original>I</original>
    <variation>N</variation>
    <location>
        <position position="346"/>
    </location>
</feature>
<evidence type="ECO:0000250" key="1">
    <source>
        <dbReference type="UniProtKB" id="A0A0M3Q1Q3"/>
    </source>
</evidence>
<evidence type="ECO:0000250" key="2">
    <source>
        <dbReference type="UniProtKB" id="A0A1C9J6A7"/>
    </source>
</evidence>
<evidence type="ECO:0000250" key="3">
    <source>
        <dbReference type="UniProtKB" id="E2E2P0"/>
    </source>
</evidence>
<evidence type="ECO:0000250" key="4">
    <source>
        <dbReference type="UniProtKB" id="Q9X839"/>
    </source>
</evidence>
<evidence type="ECO:0000255" key="5"/>
<evidence type="ECO:0000269" key="6">
    <source>
    </source>
</evidence>
<evidence type="ECO:0000303" key="7">
    <source>
    </source>
</evidence>
<evidence type="ECO:0000305" key="8"/>
<gene>
    <name evidence="7" type="primary">TPS7</name>
</gene>
<proteinExistence type="evidence at protein level"/>
<reference key="1">
    <citation type="journal article" date="2013" name="Arch. Biochem. Biophys.">
        <title>Stereochemical mechanism of two sabinene hydrate synthases forming antipodal monoterpenes in thyme (Thymus vulgaris).</title>
        <authorList>
            <person name="Krause S.T."/>
            <person name="Koellner T.G."/>
            <person name="Asbach J."/>
            <person name="Degenhardt J."/>
        </authorList>
    </citation>
    <scope>NUCLEOTIDE SEQUENCE [MRNA]</scope>
    <scope>FUNCTION</scope>
    <scope>MUTAGENESIS OF ILE-346</scope>
    <scope>CATALYTIC ACTIVITY</scope>
    <scope>PATHWAY</scope>
    <scope>BIOPHYSICOCHEMICAL PROPERTIES</scope>
</reference>
<name>SBHS7_THYVU</name>
<dbReference type="EC" id="4.2.3.11" evidence="6"/>
<dbReference type="EMBL" id="JX946358">
    <property type="protein sequence ID" value="AGA96120.1"/>
    <property type="molecule type" value="mRNA"/>
</dbReference>
<dbReference type="SMR" id="L0HB77"/>
<dbReference type="BRENDA" id="4.2.3.11">
    <property type="organism ID" value="12984"/>
</dbReference>
<dbReference type="UniPathway" id="UPA00213"/>
<dbReference type="GO" id="GO:0009507">
    <property type="term" value="C:chloroplast"/>
    <property type="evidence" value="ECO:0007669"/>
    <property type="project" value="UniProtKB-SubCell"/>
</dbReference>
<dbReference type="GO" id="GO:0000287">
    <property type="term" value="F:magnesium ion binding"/>
    <property type="evidence" value="ECO:0007669"/>
    <property type="project" value="InterPro"/>
</dbReference>
<dbReference type="GO" id="GO:0042803">
    <property type="term" value="F:protein homodimerization activity"/>
    <property type="evidence" value="ECO:0000250"/>
    <property type="project" value="UniProtKB"/>
</dbReference>
<dbReference type="GO" id="GO:0050469">
    <property type="term" value="F:sabinene-hydrate synthase activity"/>
    <property type="evidence" value="ECO:0007669"/>
    <property type="project" value="UniProtKB-EC"/>
</dbReference>
<dbReference type="GO" id="GO:0010333">
    <property type="term" value="F:terpene synthase activity"/>
    <property type="evidence" value="ECO:0007669"/>
    <property type="project" value="InterPro"/>
</dbReference>
<dbReference type="GO" id="GO:0016102">
    <property type="term" value="P:diterpenoid biosynthetic process"/>
    <property type="evidence" value="ECO:0007669"/>
    <property type="project" value="InterPro"/>
</dbReference>
<dbReference type="CDD" id="cd00684">
    <property type="entry name" value="Terpene_cyclase_plant_C1"/>
    <property type="match status" value="1"/>
</dbReference>
<dbReference type="FunFam" id="1.10.600.10:FF:000007">
    <property type="entry name" value="Isoprene synthase, chloroplastic"/>
    <property type="match status" value="1"/>
</dbReference>
<dbReference type="FunFam" id="1.50.10.130:FF:000001">
    <property type="entry name" value="Isoprene synthase, chloroplastic"/>
    <property type="match status" value="1"/>
</dbReference>
<dbReference type="Gene3D" id="1.10.600.10">
    <property type="entry name" value="Farnesyl Diphosphate Synthase"/>
    <property type="match status" value="1"/>
</dbReference>
<dbReference type="Gene3D" id="1.50.10.130">
    <property type="entry name" value="Terpene synthase, N-terminal domain"/>
    <property type="match status" value="1"/>
</dbReference>
<dbReference type="InterPro" id="IPR008949">
    <property type="entry name" value="Isoprenoid_synthase_dom_sf"/>
</dbReference>
<dbReference type="InterPro" id="IPR034741">
    <property type="entry name" value="Terpene_cyclase-like_1_C"/>
</dbReference>
<dbReference type="InterPro" id="IPR044814">
    <property type="entry name" value="Terpene_cyclase_plant_C1"/>
</dbReference>
<dbReference type="InterPro" id="IPR001906">
    <property type="entry name" value="Terpene_synth_N"/>
</dbReference>
<dbReference type="InterPro" id="IPR036965">
    <property type="entry name" value="Terpene_synth_N_sf"/>
</dbReference>
<dbReference type="InterPro" id="IPR050148">
    <property type="entry name" value="Terpene_synthase-like"/>
</dbReference>
<dbReference type="InterPro" id="IPR005630">
    <property type="entry name" value="Terpene_synthase_metal-bd"/>
</dbReference>
<dbReference type="InterPro" id="IPR008930">
    <property type="entry name" value="Terpenoid_cyclase/PrenylTrfase"/>
</dbReference>
<dbReference type="PANTHER" id="PTHR31225">
    <property type="entry name" value="OS04G0344100 PROTEIN-RELATED"/>
    <property type="match status" value="1"/>
</dbReference>
<dbReference type="PANTHER" id="PTHR31225:SF9">
    <property type="entry name" value="TERPENE SYNTHASE 10"/>
    <property type="match status" value="1"/>
</dbReference>
<dbReference type="Pfam" id="PF01397">
    <property type="entry name" value="Terpene_synth"/>
    <property type="match status" value="1"/>
</dbReference>
<dbReference type="Pfam" id="PF03936">
    <property type="entry name" value="Terpene_synth_C"/>
    <property type="match status" value="1"/>
</dbReference>
<dbReference type="SFLD" id="SFLDS00005">
    <property type="entry name" value="Isoprenoid_Synthase_Type_I"/>
    <property type="match status" value="1"/>
</dbReference>
<dbReference type="SFLD" id="SFLDG01019">
    <property type="entry name" value="Terpene_Cyclase_Like_1_C_Termi"/>
    <property type="match status" value="1"/>
</dbReference>
<dbReference type="SUPFAM" id="SSF48239">
    <property type="entry name" value="Terpenoid cyclases/Protein prenyltransferases"/>
    <property type="match status" value="1"/>
</dbReference>
<dbReference type="SUPFAM" id="SSF48576">
    <property type="entry name" value="Terpenoid synthases"/>
    <property type="match status" value="1"/>
</dbReference>
<organism>
    <name type="scientific">Thymus vulgaris</name>
    <name type="common">Thyme</name>
    <dbReference type="NCBI Taxonomy" id="49992"/>
    <lineage>
        <taxon>Eukaryota</taxon>
        <taxon>Viridiplantae</taxon>
        <taxon>Streptophyta</taxon>
        <taxon>Embryophyta</taxon>
        <taxon>Tracheophyta</taxon>
        <taxon>Spermatophyta</taxon>
        <taxon>Magnoliopsida</taxon>
        <taxon>eudicotyledons</taxon>
        <taxon>Gunneridae</taxon>
        <taxon>Pentapetalae</taxon>
        <taxon>asterids</taxon>
        <taxon>lamiids</taxon>
        <taxon>Lamiales</taxon>
        <taxon>Lamiaceae</taxon>
        <taxon>Nepetoideae</taxon>
        <taxon>Mentheae</taxon>
        <taxon>Thymus</taxon>
    </lineage>
</organism>
<keyword id="KW-0150">Chloroplast</keyword>
<keyword id="KW-0456">Lyase</keyword>
<keyword id="KW-0460">Magnesium</keyword>
<keyword id="KW-0464">Manganese</keyword>
<keyword id="KW-0479">Metal-binding</keyword>
<keyword id="KW-0934">Plastid</keyword>
<keyword id="KW-0809">Transit peptide</keyword>
<accession>L0HB77</accession>
<protein>
    <recommendedName>
        <fullName evidence="7">(E)-sabinene hydrate synthase, chloroplastic</fullName>
        <ecNumber evidence="6">4.2.3.11</ecNumber>
    </recommendedName>
    <alternativeName>
        <fullName evidence="7">Terpene synthase 7</fullName>
        <shortName evidence="7">TvTPS7</shortName>
    </alternativeName>
</protein>
<sequence>MSTISINHVGILRNPLQCKNKRTSINKPWSLSLPRSSPASRLVKPCRVSSKVDTMPDEITRRSGNYEPSLWDLDFIQSLDNHHPYVKEMQLKREEELIVQVKMLLGTKMEAVKQLELIDDLKNLGLSYFFRDEIKTILTSIYNNSFENNNQVGDLYFTALGFRLLRQHGFNVSQQIFDCFKDNDFDETLIGEDTKGILQLYEASFHLREGENTLELARQISTKYLQKKVDEGSINDENLSSWIRHSLDLPLHWRIQRLEARCFLDAYAAREDKNPLIFKLAELDFNIIQATQQQELKEISRWWNDSSLAEKLPFVRDRVVECYFWAVGLFEGHEFGFQRKITAAIIILITAIDDVYDVYGTLDELQLFTDVIRRWDTQSIDQLPYYMQLCYLALYNFVSDLAYDILKDRGLNTIPYLHRSWVELVEAYLKEAGWYENGYTPSLEEYLTNATISIGVPPIVLPVEVSLPNSTIHRTQFDRPHKILDLSARVLRLADDLGTASSELERGDVPKAIQCYMKDNNASEEEAREHVRFMIREAWKELNTAMAEPDNCPFTEQTVEAAANLGRAAQFIYLEGDGHAHFQIHQHLENLFFHPCV</sequence>